<sequence>MIKLRLKRFGKKREASFRLVACNSTSRRDGRPLQELGFYNPRTKETRLDTEAIRERLGQGAQPTDIVRTLLERGGLIEKTVRPSVTVGQAKQTAKREAAAKQAAKDAAEAKAAAAAEAEAPAADAEASEG</sequence>
<protein>
    <recommendedName>
        <fullName evidence="1">Small ribosomal subunit protein bS16</fullName>
    </recommendedName>
    <alternativeName>
        <fullName evidence="3">30S ribosomal protein S16</fullName>
    </alternativeName>
</protein>
<gene>
    <name evidence="1" type="primary">rpsP</name>
    <name evidence="1" type="synonym">rps16</name>
    <name type="ordered locus">Syncc9902_1516</name>
</gene>
<proteinExistence type="inferred from homology"/>
<keyword id="KW-1185">Reference proteome</keyword>
<keyword id="KW-0687">Ribonucleoprotein</keyword>
<keyword id="KW-0689">Ribosomal protein</keyword>
<feature type="chain" id="PRO_0000243883" description="Small ribosomal subunit protein bS16">
    <location>
        <begin position="1"/>
        <end position="130"/>
    </location>
</feature>
<feature type="region of interest" description="Disordered" evidence="2">
    <location>
        <begin position="98"/>
        <end position="130"/>
    </location>
</feature>
<feature type="compositionally biased region" description="Basic and acidic residues" evidence="2">
    <location>
        <begin position="98"/>
        <end position="109"/>
    </location>
</feature>
<feature type="compositionally biased region" description="Low complexity" evidence="2">
    <location>
        <begin position="110"/>
        <end position="130"/>
    </location>
</feature>
<reference key="1">
    <citation type="submission" date="2005-08" db="EMBL/GenBank/DDBJ databases">
        <title>Complete sequence of Synechococcus sp. CC9902.</title>
        <authorList>
            <person name="Copeland A."/>
            <person name="Lucas S."/>
            <person name="Lapidus A."/>
            <person name="Barry K."/>
            <person name="Detter J.C."/>
            <person name="Glavina T."/>
            <person name="Hammon N."/>
            <person name="Israni S."/>
            <person name="Pitluck S."/>
            <person name="Martinez M."/>
            <person name="Schmutz J."/>
            <person name="Larimer F."/>
            <person name="Land M."/>
            <person name="Kyrpides N."/>
            <person name="Ivanova N."/>
            <person name="Richardson P."/>
        </authorList>
    </citation>
    <scope>NUCLEOTIDE SEQUENCE [LARGE SCALE GENOMIC DNA]</scope>
    <source>
        <strain>CC9902</strain>
    </source>
</reference>
<dbReference type="EMBL" id="CP000097">
    <property type="protein sequence ID" value="ABB26474.1"/>
    <property type="molecule type" value="Genomic_DNA"/>
</dbReference>
<dbReference type="RefSeq" id="WP_011360293.1">
    <property type="nucleotide sequence ID" value="NC_007513.1"/>
</dbReference>
<dbReference type="SMR" id="Q3AX02"/>
<dbReference type="STRING" id="316279.Syncc9902_1516"/>
<dbReference type="KEGG" id="sye:Syncc9902_1516"/>
<dbReference type="eggNOG" id="COG0228">
    <property type="taxonomic scope" value="Bacteria"/>
</dbReference>
<dbReference type="HOGENOM" id="CLU_100590_3_2_3"/>
<dbReference type="OrthoDB" id="9807878at2"/>
<dbReference type="Proteomes" id="UP000002712">
    <property type="component" value="Chromosome"/>
</dbReference>
<dbReference type="GO" id="GO:0005737">
    <property type="term" value="C:cytoplasm"/>
    <property type="evidence" value="ECO:0007669"/>
    <property type="project" value="UniProtKB-ARBA"/>
</dbReference>
<dbReference type="GO" id="GO:0015935">
    <property type="term" value="C:small ribosomal subunit"/>
    <property type="evidence" value="ECO:0007669"/>
    <property type="project" value="TreeGrafter"/>
</dbReference>
<dbReference type="GO" id="GO:0003735">
    <property type="term" value="F:structural constituent of ribosome"/>
    <property type="evidence" value="ECO:0007669"/>
    <property type="project" value="InterPro"/>
</dbReference>
<dbReference type="GO" id="GO:0006412">
    <property type="term" value="P:translation"/>
    <property type="evidence" value="ECO:0007669"/>
    <property type="project" value="UniProtKB-UniRule"/>
</dbReference>
<dbReference type="Gene3D" id="3.30.1320.10">
    <property type="match status" value="1"/>
</dbReference>
<dbReference type="HAMAP" id="MF_00385">
    <property type="entry name" value="Ribosomal_bS16"/>
    <property type="match status" value="1"/>
</dbReference>
<dbReference type="InterPro" id="IPR000307">
    <property type="entry name" value="Ribosomal_bS16"/>
</dbReference>
<dbReference type="InterPro" id="IPR020592">
    <property type="entry name" value="Ribosomal_bS16_CS"/>
</dbReference>
<dbReference type="InterPro" id="IPR023803">
    <property type="entry name" value="Ribosomal_bS16_dom_sf"/>
</dbReference>
<dbReference type="NCBIfam" id="TIGR00002">
    <property type="entry name" value="S16"/>
    <property type="match status" value="1"/>
</dbReference>
<dbReference type="PANTHER" id="PTHR12919">
    <property type="entry name" value="30S RIBOSOMAL PROTEIN S16"/>
    <property type="match status" value="1"/>
</dbReference>
<dbReference type="PANTHER" id="PTHR12919:SF20">
    <property type="entry name" value="SMALL RIBOSOMAL SUBUNIT PROTEIN BS16M"/>
    <property type="match status" value="1"/>
</dbReference>
<dbReference type="Pfam" id="PF00886">
    <property type="entry name" value="Ribosomal_S16"/>
    <property type="match status" value="1"/>
</dbReference>
<dbReference type="SUPFAM" id="SSF54565">
    <property type="entry name" value="Ribosomal protein S16"/>
    <property type="match status" value="1"/>
</dbReference>
<dbReference type="PROSITE" id="PS00732">
    <property type="entry name" value="RIBOSOMAL_S16"/>
    <property type="match status" value="1"/>
</dbReference>
<comment type="similarity">
    <text evidence="1">Belongs to the bacterial ribosomal protein bS16 family.</text>
</comment>
<organism>
    <name type="scientific">Synechococcus sp. (strain CC9902)</name>
    <dbReference type="NCBI Taxonomy" id="316279"/>
    <lineage>
        <taxon>Bacteria</taxon>
        <taxon>Bacillati</taxon>
        <taxon>Cyanobacteriota</taxon>
        <taxon>Cyanophyceae</taxon>
        <taxon>Synechococcales</taxon>
        <taxon>Synechococcaceae</taxon>
        <taxon>Synechococcus</taxon>
    </lineage>
</organism>
<evidence type="ECO:0000255" key="1">
    <source>
        <dbReference type="HAMAP-Rule" id="MF_00385"/>
    </source>
</evidence>
<evidence type="ECO:0000256" key="2">
    <source>
        <dbReference type="SAM" id="MobiDB-lite"/>
    </source>
</evidence>
<evidence type="ECO:0000305" key="3"/>
<name>RS16_SYNS9</name>
<accession>Q3AX02</accession>